<reference key="1">
    <citation type="journal article" date="1995" name="J. Mol. Biol.">
        <title>The mitochondrial DNA of the amoeboid protozoon, Acanthamoeba castellanii: complete sequence, gene content and genome organization.</title>
        <authorList>
            <person name="Burger G."/>
            <person name="Plante I."/>
            <person name="Lonergan K.M."/>
            <person name="Gray M.W."/>
        </authorList>
    </citation>
    <scope>NUCLEOTIDE SEQUENCE [GENOMIC DNA]</scope>
    <source>
        <strain>ATCC 30010 / Neff</strain>
    </source>
</reference>
<keyword id="KW-0496">Mitochondrion</keyword>
<keyword id="KW-0687">Ribonucleoprotein</keyword>
<keyword id="KW-0689">Ribosomal protein</keyword>
<dbReference type="EMBL" id="U12386">
    <property type="protein sequence ID" value="AAD11836.1"/>
    <property type="molecule type" value="Genomic_DNA"/>
</dbReference>
<dbReference type="PIR" id="S53844">
    <property type="entry name" value="S53844"/>
</dbReference>
<dbReference type="RefSeq" id="NP_042543.1">
    <property type="nucleotide sequence ID" value="NC_001637.1"/>
</dbReference>
<dbReference type="GeneID" id="1734040"/>
<dbReference type="GO" id="GO:0005739">
    <property type="term" value="C:mitochondrion"/>
    <property type="evidence" value="ECO:0007669"/>
    <property type="project" value="UniProtKB-SubCell"/>
</dbReference>
<dbReference type="GO" id="GO:1990904">
    <property type="term" value="C:ribonucleoprotein complex"/>
    <property type="evidence" value="ECO:0007669"/>
    <property type="project" value="UniProtKB-KW"/>
</dbReference>
<dbReference type="GO" id="GO:0005840">
    <property type="term" value="C:ribosome"/>
    <property type="evidence" value="ECO:0007669"/>
    <property type="project" value="UniProtKB-KW"/>
</dbReference>
<dbReference type="GO" id="GO:0003735">
    <property type="term" value="F:structural constituent of ribosome"/>
    <property type="evidence" value="ECO:0007669"/>
    <property type="project" value="InterPro"/>
</dbReference>
<dbReference type="GO" id="GO:0006412">
    <property type="term" value="P:translation"/>
    <property type="evidence" value="ECO:0007669"/>
    <property type="project" value="InterPro"/>
</dbReference>
<dbReference type="Gene3D" id="3.30.1550.10">
    <property type="entry name" value="Ribosomal protein L11/L12, N-terminal domain"/>
    <property type="match status" value="1"/>
</dbReference>
<dbReference type="HAMAP" id="MF_00736">
    <property type="entry name" value="Ribosomal_uL11"/>
    <property type="match status" value="1"/>
</dbReference>
<dbReference type="InterPro" id="IPR000911">
    <property type="entry name" value="Ribosomal_uL11"/>
</dbReference>
<dbReference type="InterPro" id="IPR036796">
    <property type="entry name" value="Ribosomal_uL11_N_sf"/>
</dbReference>
<dbReference type="SMART" id="SM00649">
    <property type="entry name" value="RL11"/>
    <property type="match status" value="1"/>
</dbReference>
<dbReference type="SUPFAM" id="SSF54747">
    <property type="entry name" value="Ribosomal L11/L12e N-terminal domain"/>
    <property type="match status" value="1"/>
</dbReference>
<organism>
    <name type="scientific">Acanthamoeba castellanii</name>
    <name type="common">Amoeba</name>
    <dbReference type="NCBI Taxonomy" id="5755"/>
    <lineage>
        <taxon>Eukaryota</taxon>
        <taxon>Amoebozoa</taxon>
        <taxon>Discosea</taxon>
        <taxon>Longamoebia</taxon>
        <taxon>Centramoebida</taxon>
        <taxon>Acanthamoebidae</taxon>
        <taxon>Acanthamoeba</taxon>
    </lineage>
</organism>
<geneLocation type="mitochondrion"/>
<name>RM11_ACACA</name>
<proteinExistence type="inferred from homology"/>
<gene>
    <name type="primary">RPL11</name>
</gene>
<sequence>MRINLNFHYDKLHLKEIIILIPKYHTNMVSFLTPILGLYGINVKEFINDFEIKTRFINFDVIVPTLVKISKIKTFEIILKTPYVISILSNLNNFSVTKPNIDLLSVYKISLLKSVFHSNFLDVFHRRIYLSLRKYLSLVIKVNFHLSVSSALAKKSLSNLNNLLLLKFNIQNNILFAKLLNNRYGLFVSFNNSSASNLNYLKTVLAIQNISIFKAKSNLLSSLTGNKYFFGNIYFIGATSLKYFIGFLKEVSLKSFGSNFFPIFFKIRSNLVSQPFVKLFLSVFNSQVKLINFYALRVIYTIFIKIFKNLNFLNKKLTFLLNRNNSNSNANISSNIKES</sequence>
<evidence type="ECO:0000305" key="1"/>
<feature type="chain" id="PRO_0000104452" description="Large ribosomal subunit protein uL11m">
    <location>
        <begin position="1"/>
        <end position="339"/>
    </location>
</feature>
<comment type="subcellular location">
    <subcellularLocation>
        <location>Mitochondrion</location>
    </subcellularLocation>
</comment>
<comment type="similarity">
    <text evidence="1">Belongs to the universal ribosomal protein uL11 family.</text>
</comment>
<protein>
    <recommendedName>
        <fullName evidence="1">Large ribosomal subunit protein uL11m</fullName>
    </recommendedName>
    <alternativeName>
        <fullName>60S ribosomal protein L11, mitochondrial</fullName>
    </alternativeName>
</protein>
<accession>P46766</accession>